<name>HIS4_CROS8</name>
<organism>
    <name type="scientific">Cronobacter sakazakii (strain ATCC BAA-894)</name>
    <name type="common">Enterobacter sakazakii</name>
    <dbReference type="NCBI Taxonomy" id="290339"/>
    <lineage>
        <taxon>Bacteria</taxon>
        <taxon>Pseudomonadati</taxon>
        <taxon>Pseudomonadota</taxon>
        <taxon>Gammaproteobacteria</taxon>
        <taxon>Enterobacterales</taxon>
        <taxon>Enterobacteriaceae</taxon>
        <taxon>Cronobacter</taxon>
    </lineage>
</organism>
<proteinExistence type="inferred from homology"/>
<sequence>MIIPALDLIDGTVVRLHQGDYGQQRDYGRDPLPRLQDYEAQGAQLLHLVDLTGAKDPAKRQIALIQKLVAGVNVPVQVGGGVRSEDDVAALLDAGVARVVVGSTAVKAPQDVQRWFQRFGADALVLALDVRIDDAGNKQVAVSGWQENSGVTLETLVESYLPAGLKHVLCTDISRDGTLSGSNVALYEEVCARYPQVAFQSSGGIGELSDIRALRGSGVGGVIVGRALLEGKFNVTEAIQCWQNG</sequence>
<keyword id="KW-0028">Amino-acid biosynthesis</keyword>
<keyword id="KW-0963">Cytoplasm</keyword>
<keyword id="KW-0368">Histidine biosynthesis</keyword>
<keyword id="KW-0413">Isomerase</keyword>
<keyword id="KW-1185">Reference proteome</keyword>
<comment type="catalytic activity">
    <reaction evidence="1">
        <text>1-(5-phospho-beta-D-ribosyl)-5-[(5-phospho-beta-D-ribosylamino)methylideneamino]imidazole-4-carboxamide = 5-[(5-phospho-1-deoxy-D-ribulos-1-ylimino)methylamino]-1-(5-phospho-beta-D-ribosyl)imidazole-4-carboxamide</text>
        <dbReference type="Rhea" id="RHEA:15469"/>
        <dbReference type="ChEBI" id="CHEBI:58435"/>
        <dbReference type="ChEBI" id="CHEBI:58525"/>
        <dbReference type="EC" id="5.3.1.16"/>
    </reaction>
</comment>
<comment type="pathway">
    <text evidence="1">Amino-acid biosynthesis; L-histidine biosynthesis; L-histidine from 5-phospho-alpha-D-ribose 1-diphosphate: step 4/9.</text>
</comment>
<comment type="subcellular location">
    <subcellularLocation>
        <location evidence="1">Cytoplasm</location>
    </subcellularLocation>
</comment>
<comment type="similarity">
    <text evidence="1">Belongs to the HisA/HisF family.</text>
</comment>
<protein>
    <recommendedName>
        <fullName evidence="1">1-(5-phosphoribosyl)-5-[(5-phosphoribosylamino)methylideneamino] imidazole-4-carboxamide isomerase</fullName>
        <ecNumber evidence="1">5.3.1.16</ecNumber>
    </recommendedName>
    <alternativeName>
        <fullName evidence="1">Phosphoribosylformimino-5-aminoimidazole carboxamide ribotide isomerase</fullName>
    </alternativeName>
</protein>
<accession>A7MHE2</accession>
<dbReference type="EC" id="5.3.1.16" evidence="1"/>
<dbReference type="EMBL" id="CP000783">
    <property type="protein sequence ID" value="ABU76460.1"/>
    <property type="molecule type" value="Genomic_DNA"/>
</dbReference>
<dbReference type="RefSeq" id="WP_012124347.1">
    <property type="nucleotide sequence ID" value="NC_009778.1"/>
</dbReference>
<dbReference type="SMR" id="A7MHE2"/>
<dbReference type="KEGG" id="esa:ESA_01193"/>
<dbReference type="PATRIC" id="fig|290339.8.peg.1059"/>
<dbReference type="HOGENOM" id="CLU_048577_1_2_6"/>
<dbReference type="UniPathway" id="UPA00031">
    <property type="reaction ID" value="UER00009"/>
</dbReference>
<dbReference type="Proteomes" id="UP000000260">
    <property type="component" value="Chromosome"/>
</dbReference>
<dbReference type="GO" id="GO:0005737">
    <property type="term" value="C:cytoplasm"/>
    <property type="evidence" value="ECO:0007669"/>
    <property type="project" value="UniProtKB-SubCell"/>
</dbReference>
<dbReference type="GO" id="GO:0003949">
    <property type="term" value="F:1-(5-phosphoribosyl)-5-[(5-phosphoribosylamino)methylideneamino]imidazole-4-carboxamide isomerase activity"/>
    <property type="evidence" value="ECO:0007669"/>
    <property type="project" value="UniProtKB-UniRule"/>
</dbReference>
<dbReference type="GO" id="GO:0000105">
    <property type="term" value="P:L-histidine biosynthetic process"/>
    <property type="evidence" value="ECO:0007669"/>
    <property type="project" value="UniProtKB-UniRule"/>
</dbReference>
<dbReference type="GO" id="GO:0000162">
    <property type="term" value="P:L-tryptophan biosynthetic process"/>
    <property type="evidence" value="ECO:0007669"/>
    <property type="project" value="TreeGrafter"/>
</dbReference>
<dbReference type="CDD" id="cd04732">
    <property type="entry name" value="HisA"/>
    <property type="match status" value="1"/>
</dbReference>
<dbReference type="FunFam" id="3.20.20.70:FF:000009">
    <property type="entry name" value="1-(5-phosphoribosyl)-5-[(5-phosphoribosylamino)methylideneamino] imidazole-4-carboxamide isomerase"/>
    <property type="match status" value="1"/>
</dbReference>
<dbReference type="Gene3D" id="3.20.20.70">
    <property type="entry name" value="Aldolase class I"/>
    <property type="match status" value="1"/>
</dbReference>
<dbReference type="HAMAP" id="MF_01014">
    <property type="entry name" value="HisA"/>
    <property type="match status" value="1"/>
</dbReference>
<dbReference type="InterPro" id="IPR013785">
    <property type="entry name" value="Aldolase_TIM"/>
</dbReference>
<dbReference type="InterPro" id="IPR006062">
    <property type="entry name" value="His_biosynth"/>
</dbReference>
<dbReference type="InterPro" id="IPR006063">
    <property type="entry name" value="HisA_bact_arch"/>
</dbReference>
<dbReference type="InterPro" id="IPR044524">
    <property type="entry name" value="Isoase_HisA-like"/>
</dbReference>
<dbReference type="InterPro" id="IPR023016">
    <property type="entry name" value="Isoase_HisA-like_bact"/>
</dbReference>
<dbReference type="InterPro" id="IPR011060">
    <property type="entry name" value="RibuloseP-bd_barrel"/>
</dbReference>
<dbReference type="NCBIfam" id="TIGR00007">
    <property type="entry name" value="1-(5-phosphoribosyl)-5-[(5-phosphoribosylamino)methylideneamino]imidazole-4-carboxamide isomerase"/>
    <property type="match status" value="1"/>
</dbReference>
<dbReference type="PANTHER" id="PTHR43090">
    <property type="entry name" value="1-(5-PHOSPHORIBOSYL)-5-[(5-PHOSPHORIBOSYLAMINO)METHYLIDENEAMINO] IMIDAZOLE-4-CARBOXAMIDE ISOMERASE"/>
    <property type="match status" value="1"/>
</dbReference>
<dbReference type="PANTHER" id="PTHR43090:SF2">
    <property type="entry name" value="1-(5-PHOSPHORIBOSYL)-5-[(5-PHOSPHORIBOSYLAMINO)METHYLIDENEAMINO] IMIDAZOLE-4-CARBOXAMIDE ISOMERASE"/>
    <property type="match status" value="1"/>
</dbReference>
<dbReference type="Pfam" id="PF00977">
    <property type="entry name" value="His_biosynth"/>
    <property type="match status" value="1"/>
</dbReference>
<dbReference type="SUPFAM" id="SSF51366">
    <property type="entry name" value="Ribulose-phoshate binding barrel"/>
    <property type="match status" value="1"/>
</dbReference>
<feature type="chain" id="PRO_1000063207" description="1-(5-phosphoribosyl)-5-[(5-phosphoribosylamino)methylideneamino] imidazole-4-carboxamide isomerase">
    <location>
        <begin position="1"/>
        <end position="245"/>
    </location>
</feature>
<feature type="active site" description="Proton acceptor" evidence="1">
    <location>
        <position position="7"/>
    </location>
</feature>
<feature type="active site" description="Proton donor" evidence="1">
    <location>
        <position position="129"/>
    </location>
</feature>
<reference key="1">
    <citation type="journal article" date="2010" name="PLoS ONE">
        <title>Genome sequence of Cronobacter sakazakii BAA-894 and comparative genomic hybridization analysis with other Cronobacter species.</title>
        <authorList>
            <person name="Kucerova E."/>
            <person name="Clifton S.W."/>
            <person name="Xia X.Q."/>
            <person name="Long F."/>
            <person name="Porwollik S."/>
            <person name="Fulton L."/>
            <person name="Fronick C."/>
            <person name="Minx P."/>
            <person name="Kyung K."/>
            <person name="Warren W."/>
            <person name="Fulton R."/>
            <person name="Feng D."/>
            <person name="Wollam A."/>
            <person name="Shah N."/>
            <person name="Bhonagiri V."/>
            <person name="Nash W.E."/>
            <person name="Hallsworth-Pepin K."/>
            <person name="Wilson R.K."/>
            <person name="McClelland M."/>
            <person name="Forsythe S.J."/>
        </authorList>
    </citation>
    <scope>NUCLEOTIDE SEQUENCE [LARGE SCALE GENOMIC DNA]</scope>
    <source>
        <strain>ATCC BAA-894</strain>
    </source>
</reference>
<gene>
    <name evidence="1" type="primary">hisA</name>
    <name type="ordered locus">ESA_01193</name>
</gene>
<evidence type="ECO:0000255" key="1">
    <source>
        <dbReference type="HAMAP-Rule" id="MF_01014"/>
    </source>
</evidence>